<sequence length="155" mass="17862">MPKGSGKVIAQNKKAFHDYFIEETYEAGLVLQGTEIKSIRAGRVNLKDAFARVHNGEVWVHNMHISTYEQGNRFNHDPLRTRKLLLHKKEIEKLAGASKETGYALVPVRIYLKNGFAKMALGLAKGKKQYDKRHDLKEKEAKREIARAFRDRQKM</sequence>
<gene>
    <name evidence="1" type="primary">smpB</name>
    <name type="ordered locus">BT9727_4806</name>
</gene>
<proteinExistence type="inferred from homology"/>
<protein>
    <recommendedName>
        <fullName evidence="1">SsrA-binding protein</fullName>
    </recommendedName>
    <alternativeName>
        <fullName evidence="1">Small protein B</fullName>
    </alternativeName>
</protein>
<keyword id="KW-0963">Cytoplasm</keyword>
<keyword id="KW-0694">RNA-binding</keyword>
<accession>Q6HBG1</accession>
<comment type="function">
    <text evidence="1">Required for rescue of stalled ribosomes mediated by trans-translation. Binds to transfer-messenger RNA (tmRNA), required for stable association of tmRNA with ribosomes. tmRNA and SmpB together mimic tRNA shape, replacing the anticodon stem-loop with SmpB. tmRNA is encoded by the ssrA gene; the 2 termini fold to resemble tRNA(Ala) and it encodes a 'tag peptide', a short internal open reading frame. During trans-translation Ala-aminoacylated tmRNA acts like a tRNA, entering the A-site of stalled ribosomes, displacing the stalled mRNA. The ribosome then switches to translate the ORF on the tmRNA; the nascent peptide is terminated with the 'tag peptide' encoded by the tmRNA and targeted for degradation. The ribosome is freed to recommence translation, which seems to be the essential function of trans-translation.</text>
</comment>
<comment type="subcellular location">
    <subcellularLocation>
        <location evidence="1">Cytoplasm</location>
    </subcellularLocation>
    <text evidence="1">The tmRNA-SmpB complex associates with stalled 70S ribosomes.</text>
</comment>
<comment type="similarity">
    <text evidence="1">Belongs to the SmpB family.</text>
</comment>
<evidence type="ECO:0000255" key="1">
    <source>
        <dbReference type="HAMAP-Rule" id="MF_00023"/>
    </source>
</evidence>
<name>SSRP_BACHK</name>
<dbReference type="EMBL" id="AE017355">
    <property type="protein sequence ID" value="AAT63326.1"/>
    <property type="molecule type" value="Genomic_DNA"/>
</dbReference>
<dbReference type="RefSeq" id="WP_001123905.1">
    <property type="nucleotide sequence ID" value="NC_005957.1"/>
</dbReference>
<dbReference type="RefSeq" id="YP_039115.1">
    <property type="nucleotide sequence ID" value="NC_005957.1"/>
</dbReference>
<dbReference type="SMR" id="Q6HBG1"/>
<dbReference type="GeneID" id="45024939"/>
<dbReference type="KEGG" id="btk:BT9727_4806"/>
<dbReference type="PATRIC" id="fig|281309.8.peg.5113"/>
<dbReference type="HOGENOM" id="CLU_108953_0_0_9"/>
<dbReference type="Proteomes" id="UP000001301">
    <property type="component" value="Chromosome"/>
</dbReference>
<dbReference type="GO" id="GO:0005829">
    <property type="term" value="C:cytosol"/>
    <property type="evidence" value="ECO:0007669"/>
    <property type="project" value="TreeGrafter"/>
</dbReference>
<dbReference type="GO" id="GO:0003723">
    <property type="term" value="F:RNA binding"/>
    <property type="evidence" value="ECO:0007669"/>
    <property type="project" value="UniProtKB-UniRule"/>
</dbReference>
<dbReference type="GO" id="GO:0070929">
    <property type="term" value="P:trans-translation"/>
    <property type="evidence" value="ECO:0007669"/>
    <property type="project" value="UniProtKB-UniRule"/>
</dbReference>
<dbReference type="CDD" id="cd09294">
    <property type="entry name" value="SmpB"/>
    <property type="match status" value="1"/>
</dbReference>
<dbReference type="Gene3D" id="2.40.280.10">
    <property type="match status" value="1"/>
</dbReference>
<dbReference type="HAMAP" id="MF_00023">
    <property type="entry name" value="SmpB"/>
    <property type="match status" value="1"/>
</dbReference>
<dbReference type="InterPro" id="IPR023620">
    <property type="entry name" value="SmpB"/>
</dbReference>
<dbReference type="InterPro" id="IPR000037">
    <property type="entry name" value="SsrA-bd_prot"/>
</dbReference>
<dbReference type="InterPro" id="IPR020081">
    <property type="entry name" value="SsrA-bd_prot_CS"/>
</dbReference>
<dbReference type="NCBIfam" id="NF003843">
    <property type="entry name" value="PRK05422.1"/>
    <property type="match status" value="1"/>
</dbReference>
<dbReference type="NCBIfam" id="TIGR00086">
    <property type="entry name" value="smpB"/>
    <property type="match status" value="1"/>
</dbReference>
<dbReference type="PANTHER" id="PTHR30308:SF2">
    <property type="entry name" value="SSRA-BINDING PROTEIN"/>
    <property type="match status" value="1"/>
</dbReference>
<dbReference type="PANTHER" id="PTHR30308">
    <property type="entry name" value="TMRNA-BINDING COMPONENT OF TRANS-TRANSLATION TAGGING COMPLEX"/>
    <property type="match status" value="1"/>
</dbReference>
<dbReference type="Pfam" id="PF01668">
    <property type="entry name" value="SmpB"/>
    <property type="match status" value="1"/>
</dbReference>
<dbReference type="SUPFAM" id="SSF74982">
    <property type="entry name" value="Small protein B (SmpB)"/>
    <property type="match status" value="1"/>
</dbReference>
<dbReference type="PROSITE" id="PS01317">
    <property type="entry name" value="SSRP"/>
    <property type="match status" value="1"/>
</dbReference>
<organism>
    <name type="scientific">Bacillus thuringiensis subsp. konkukian (strain 97-27)</name>
    <dbReference type="NCBI Taxonomy" id="281309"/>
    <lineage>
        <taxon>Bacteria</taxon>
        <taxon>Bacillati</taxon>
        <taxon>Bacillota</taxon>
        <taxon>Bacilli</taxon>
        <taxon>Bacillales</taxon>
        <taxon>Bacillaceae</taxon>
        <taxon>Bacillus</taxon>
        <taxon>Bacillus cereus group</taxon>
    </lineage>
</organism>
<reference key="1">
    <citation type="journal article" date="2006" name="J. Bacteriol.">
        <title>Pathogenomic sequence analysis of Bacillus cereus and Bacillus thuringiensis isolates closely related to Bacillus anthracis.</title>
        <authorList>
            <person name="Han C.S."/>
            <person name="Xie G."/>
            <person name="Challacombe J.F."/>
            <person name="Altherr M.R."/>
            <person name="Bhotika S.S."/>
            <person name="Bruce D."/>
            <person name="Campbell C.S."/>
            <person name="Campbell M.L."/>
            <person name="Chen J."/>
            <person name="Chertkov O."/>
            <person name="Cleland C."/>
            <person name="Dimitrijevic M."/>
            <person name="Doggett N.A."/>
            <person name="Fawcett J.J."/>
            <person name="Glavina T."/>
            <person name="Goodwin L.A."/>
            <person name="Hill K.K."/>
            <person name="Hitchcock P."/>
            <person name="Jackson P.J."/>
            <person name="Keim P."/>
            <person name="Kewalramani A.R."/>
            <person name="Longmire J."/>
            <person name="Lucas S."/>
            <person name="Malfatti S."/>
            <person name="McMurry K."/>
            <person name="Meincke L.J."/>
            <person name="Misra M."/>
            <person name="Moseman B.L."/>
            <person name="Mundt M."/>
            <person name="Munk A.C."/>
            <person name="Okinaka R.T."/>
            <person name="Parson-Quintana B."/>
            <person name="Reilly L.P."/>
            <person name="Richardson P."/>
            <person name="Robinson D.L."/>
            <person name="Rubin E."/>
            <person name="Saunders E."/>
            <person name="Tapia R."/>
            <person name="Tesmer J.G."/>
            <person name="Thayer N."/>
            <person name="Thompson L.S."/>
            <person name="Tice H."/>
            <person name="Ticknor L.O."/>
            <person name="Wills P.L."/>
            <person name="Brettin T.S."/>
            <person name="Gilna P."/>
        </authorList>
    </citation>
    <scope>NUCLEOTIDE SEQUENCE [LARGE SCALE GENOMIC DNA]</scope>
    <source>
        <strain>97-27</strain>
    </source>
</reference>
<feature type="chain" id="PRO_0000102903" description="SsrA-binding protein">
    <location>
        <begin position="1"/>
        <end position="155"/>
    </location>
</feature>